<organism>
    <name type="scientific">Corynebacterium urealyticum (strain ATCC 43042 / DSM 7109)</name>
    <dbReference type="NCBI Taxonomy" id="504474"/>
    <lineage>
        <taxon>Bacteria</taxon>
        <taxon>Bacillati</taxon>
        <taxon>Actinomycetota</taxon>
        <taxon>Actinomycetes</taxon>
        <taxon>Mycobacteriales</taxon>
        <taxon>Corynebacteriaceae</taxon>
        <taxon>Corynebacterium</taxon>
    </lineage>
</organism>
<feature type="chain" id="PRO_1000127511" description="D-aminoacyl-tRNA deacylase">
    <location>
        <begin position="1"/>
        <end position="155"/>
    </location>
</feature>
<feature type="short sequence motif" description="Gly-cisPro motif, important for rejection of L-amino acids" evidence="1">
    <location>
        <begin position="147"/>
        <end position="148"/>
    </location>
</feature>
<dbReference type="EC" id="3.1.1.96" evidence="1"/>
<dbReference type="EMBL" id="AM942444">
    <property type="protein sequence ID" value="CAQ04855.1"/>
    <property type="molecule type" value="Genomic_DNA"/>
</dbReference>
<dbReference type="RefSeq" id="WP_012360144.1">
    <property type="nucleotide sequence ID" value="NC_010545.1"/>
</dbReference>
<dbReference type="SMR" id="B1VDF7"/>
<dbReference type="STRING" id="504474.cu0895"/>
<dbReference type="GeneID" id="60603671"/>
<dbReference type="KEGG" id="cur:cu0895"/>
<dbReference type="eggNOG" id="COG1490">
    <property type="taxonomic scope" value="Bacteria"/>
</dbReference>
<dbReference type="HOGENOM" id="CLU_076901_1_2_11"/>
<dbReference type="Proteomes" id="UP000001727">
    <property type="component" value="Chromosome"/>
</dbReference>
<dbReference type="GO" id="GO:0005737">
    <property type="term" value="C:cytoplasm"/>
    <property type="evidence" value="ECO:0007669"/>
    <property type="project" value="UniProtKB-SubCell"/>
</dbReference>
<dbReference type="GO" id="GO:0051500">
    <property type="term" value="F:D-tyrosyl-tRNA(Tyr) deacylase activity"/>
    <property type="evidence" value="ECO:0007669"/>
    <property type="project" value="TreeGrafter"/>
</dbReference>
<dbReference type="GO" id="GO:0106026">
    <property type="term" value="F:Gly-tRNA(Ala) deacylase activity"/>
    <property type="evidence" value="ECO:0007669"/>
    <property type="project" value="UniProtKB-UniRule"/>
</dbReference>
<dbReference type="GO" id="GO:0043908">
    <property type="term" value="F:Ser(Gly)-tRNA(Ala) hydrolase activity"/>
    <property type="evidence" value="ECO:0007669"/>
    <property type="project" value="UniProtKB-UniRule"/>
</dbReference>
<dbReference type="GO" id="GO:0000049">
    <property type="term" value="F:tRNA binding"/>
    <property type="evidence" value="ECO:0007669"/>
    <property type="project" value="UniProtKB-UniRule"/>
</dbReference>
<dbReference type="GO" id="GO:0019478">
    <property type="term" value="P:D-amino acid catabolic process"/>
    <property type="evidence" value="ECO:0007669"/>
    <property type="project" value="UniProtKB-UniRule"/>
</dbReference>
<dbReference type="Gene3D" id="3.50.80.10">
    <property type="entry name" value="D-tyrosyl-tRNA(Tyr) deacylase"/>
    <property type="match status" value="1"/>
</dbReference>
<dbReference type="HAMAP" id="MF_00518">
    <property type="entry name" value="Deacylase_Dtd"/>
    <property type="match status" value="1"/>
</dbReference>
<dbReference type="InterPro" id="IPR003732">
    <property type="entry name" value="Daa-tRNA_deacyls_DTD"/>
</dbReference>
<dbReference type="InterPro" id="IPR023509">
    <property type="entry name" value="DTD-like_sf"/>
</dbReference>
<dbReference type="NCBIfam" id="TIGR00256">
    <property type="entry name" value="D-aminoacyl-tRNA deacylase"/>
    <property type="match status" value="1"/>
</dbReference>
<dbReference type="PANTHER" id="PTHR10472:SF5">
    <property type="entry name" value="D-AMINOACYL-TRNA DEACYLASE 1"/>
    <property type="match status" value="1"/>
</dbReference>
<dbReference type="PANTHER" id="PTHR10472">
    <property type="entry name" value="D-TYROSYL-TRNA TYR DEACYLASE"/>
    <property type="match status" value="1"/>
</dbReference>
<dbReference type="Pfam" id="PF02580">
    <property type="entry name" value="Tyr_Deacylase"/>
    <property type="match status" value="1"/>
</dbReference>
<dbReference type="SUPFAM" id="SSF69500">
    <property type="entry name" value="DTD-like"/>
    <property type="match status" value="1"/>
</dbReference>
<gene>
    <name evidence="1" type="primary">dtd</name>
    <name type="ordered locus">cu0895</name>
</gene>
<accession>B1VDF7</accession>
<proteinExistence type="inferred from homology"/>
<protein>
    <recommendedName>
        <fullName evidence="1">D-aminoacyl-tRNA deacylase</fullName>
        <shortName evidence="1">DTD</shortName>
        <ecNumber evidence="1">3.1.1.96</ecNumber>
    </recommendedName>
    <alternativeName>
        <fullName evidence="1">Gly-tRNA(Ala) deacylase</fullName>
    </alternativeName>
</protein>
<evidence type="ECO:0000255" key="1">
    <source>
        <dbReference type="HAMAP-Rule" id="MF_00518"/>
    </source>
</evidence>
<keyword id="KW-0963">Cytoplasm</keyword>
<keyword id="KW-0378">Hydrolase</keyword>
<keyword id="KW-1185">Reference proteome</keyword>
<keyword id="KW-0694">RNA-binding</keyword>
<keyword id="KW-0820">tRNA-binding</keyword>
<reference key="1">
    <citation type="journal article" date="2008" name="J. Biotechnol.">
        <title>The lifestyle of Corynebacterium urealyticum derived from its complete genome sequence established by pyrosequencing.</title>
        <authorList>
            <person name="Tauch A."/>
            <person name="Trost E."/>
            <person name="Tilker A."/>
            <person name="Ludewig U."/>
            <person name="Schneiker S."/>
            <person name="Goesmann A."/>
            <person name="Arnold W."/>
            <person name="Bekel T."/>
            <person name="Brinkrolf K."/>
            <person name="Brune I."/>
            <person name="Goetker S."/>
            <person name="Kalinowski J."/>
            <person name="Kamp P.-B."/>
            <person name="Lobo F.P."/>
            <person name="Viehoever P."/>
            <person name="Weisshaar B."/>
            <person name="Soriano F."/>
            <person name="Droege M."/>
            <person name="Puehler A."/>
        </authorList>
    </citation>
    <scope>NUCLEOTIDE SEQUENCE [LARGE SCALE GENOMIC DNA]</scope>
    <source>
        <strain>ATCC 43042 / DSM 7109</strain>
    </source>
</reference>
<comment type="function">
    <text evidence="1">An aminoacyl-tRNA editing enzyme that deacylates mischarged D-aminoacyl-tRNAs. Also deacylates mischarged glycyl-tRNA(Ala), protecting cells against glycine mischarging by AlaRS. Acts via tRNA-based rather than protein-based catalysis; rejects L-amino acids rather than detecting D-amino acids in the active site. By recycling D-aminoacyl-tRNA to D-amino acids and free tRNA molecules, this enzyme counteracts the toxicity associated with the formation of D-aminoacyl-tRNA entities in vivo and helps enforce protein L-homochirality.</text>
</comment>
<comment type="catalytic activity">
    <reaction evidence="1">
        <text>glycyl-tRNA(Ala) + H2O = tRNA(Ala) + glycine + H(+)</text>
        <dbReference type="Rhea" id="RHEA:53744"/>
        <dbReference type="Rhea" id="RHEA-COMP:9657"/>
        <dbReference type="Rhea" id="RHEA-COMP:13640"/>
        <dbReference type="ChEBI" id="CHEBI:15377"/>
        <dbReference type="ChEBI" id="CHEBI:15378"/>
        <dbReference type="ChEBI" id="CHEBI:57305"/>
        <dbReference type="ChEBI" id="CHEBI:78442"/>
        <dbReference type="ChEBI" id="CHEBI:78522"/>
        <dbReference type="EC" id="3.1.1.96"/>
    </reaction>
</comment>
<comment type="catalytic activity">
    <reaction evidence="1">
        <text>a D-aminoacyl-tRNA + H2O = a tRNA + a D-alpha-amino acid + H(+)</text>
        <dbReference type="Rhea" id="RHEA:13953"/>
        <dbReference type="Rhea" id="RHEA-COMP:10123"/>
        <dbReference type="Rhea" id="RHEA-COMP:10124"/>
        <dbReference type="ChEBI" id="CHEBI:15377"/>
        <dbReference type="ChEBI" id="CHEBI:15378"/>
        <dbReference type="ChEBI" id="CHEBI:59871"/>
        <dbReference type="ChEBI" id="CHEBI:78442"/>
        <dbReference type="ChEBI" id="CHEBI:79333"/>
        <dbReference type="EC" id="3.1.1.96"/>
    </reaction>
</comment>
<comment type="subunit">
    <text evidence="1">Homodimer.</text>
</comment>
<comment type="subcellular location">
    <subcellularLocation>
        <location evidence="1">Cytoplasm</location>
    </subcellularLocation>
</comment>
<comment type="domain">
    <text evidence="1">A Gly-cisPro motif from one monomer fits into the active site of the other monomer to allow specific chiral rejection of L-amino acids.</text>
</comment>
<comment type="similarity">
    <text evidence="1">Belongs to the DTD family.</text>
</comment>
<sequence>MKAVISTVSQASVDVRDDSGEVRRVGEVSGPALLALIGSGRDDDADAWETMVRKIAELRLFPASGEPWGGQRDLSVEEVGGSVLVVSQFTLMGKTKRGRRPSWSEAMPGPAAEPVIEKIVHGLRNRGIHVETGEFGADMQVSSVNEGPYTVLVEC</sequence>
<name>DTD_CORU7</name>